<sequence>MNINVADLLNGNYILLLFVVLALGLCLGKLRLGSVQLGNSIGVLVVSLLLGQQHFSINTDALNLGFMLFIFCVGVEAGPNFFSIFFRDGKNYLMLALVMVGSALLIALGLGKLFGWDIGLTAGMLAGSMTSTPVLVGAGDTLRHSGIASTQLSSALDNLSLGYALTYLIGLVSLIVGARYLPKLQHQDLQTSAQQIARERGLDTDANRKVYLPVIRAYRVGPELVAWTDGKNLRELGIYRQTGCYIERIRRNGILANPDGDAVLQMGDEIALVGYPDAHARLDPSFRNGKEVFDRDLLDMRIVTEEIVVKNHNAVGRRLAQLKLTDHGCFLNRVIRSQIEMPIDDNVVLNKGDVLQVSGDARRVKTIADRIGFISIHSQVTDLLAFCAFFIIGLMIGMITFQFSNFSFGIGNAAGLLFAGIMLGFLRANHPTFGYIPQGALNMVKEFGLMVFMAGVGLSAGSGISNGLGAVGGQMLIAGLVVSLVPVVICFLFGAYVLRMNRALLFGAMMGARTCAPAMEIISDTARSNIPALGYAGTYAIANVLLTLAGTLIVIIWPGLG</sequence>
<proteinExistence type="inferred from homology"/>
<gene>
    <name evidence="1" type="primary">ybjL</name>
    <name type="ordered locus">SEN0816</name>
</gene>
<reference key="1">
    <citation type="journal article" date="2008" name="Genome Res.">
        <title>Comparative genome analysis of Salmonella enteritidis PT4 and Salmonella gallinarum 287/91 provides insights into evolutionary and host adaptation pathways.</title>
        <authorList>
            <person name="Thomson N.R."/>
            <person name="Clayton D.J."/>
            <person name="Windhorst D."/>
            <person name="Vernikos G."/>
            <person name="Davidson S."/>
            <person name="Churcher C."/>
            <person name="Quail M.A."/>
            <person name="Stevens M."/>
            <person name="Jones M.A."/>
            <person name="Watson M."/>
            <person name="Barron A."/>
            <person name="Layton A."/>
            <person name="Pickard D."/>
            <person name="Kingsley R.A."/>
            <person name="Bignell A."/>
            <person name="Clark L."/>
            <person name="Harris B."/>
            <person name="Ormond D."/>
            <person name="Abdellah Z."/>
            <person name="Brooks K."/>
            <person name="Cherevach I."/>
            <person name="Chillingworth T."/>
            <person name="Woodward J."/>
            <person name="Norberczak H."/>
            <person name="Lord A."/>
            <person name="Arrowsmith C."/>
            <person name="Jagels K."/>
            <person name="Moule S."/>
            <person name="Mungall K."/>
            <person name="Saunders M."/>
            <person name="Whitehead S."/>
            <person name="Chabalgoity J.A."/>
            <person name="Maskell D."/>
            <person name="Humphreys T."/>
            <person name="Roberts M."/>
            <person name="Barrow P.A."/>
            <person name="Dougan G."/>
            <person name="Parkhill J."/>
        </authorList>
    </citation>
    <scope>NUCLEOTIDE SEQUENCE [LARGE SCALE GENOMIC DNA]</scope>
    <source>
        <strain>P125109</strain>
    </source>
</reference>
<dbReference type="EMBL" id="AM933172">
    <property type="protein sequence ID" value="CAR32399.1"/>
    <property type="molecule type" value="Genomic_DNA"/>
</dbReference>
<dbReference type="RefSeq" id="WP_001024853.1">
    <property type="nucleotide sequence ID" value="NC_011294.1"/>
</dbReference>
<dbReference type="SMR" id="B5QXX4"/>
<dbReference type="KEGG" id="set:SEN0816"/>
<dbReference type="HOGENOM" id="CLU_035023_2_2_6"/>
<dbReference type="Proteomes" id="UP000000613">
    <property type="component" value="Chromosome"/>
</dbReference>
<dbReference type="GO" id="GO:0005886">
    <property type="term" value="C:plasma membrane"/>
    <property type="evidence" value="ECO:0007669"/>
    <property type="project" value="UniProtKB-SubCell"/>
</dbReference>
<dbReference type="GO" id="GO:0008324">
    <property type="term" value="F:monoatomic cation transmembrane transporter activity"/>
    <property type="evidence" value="ECO:0007669"/>
    <property type="project" value="InterPro"/>
</dbReference>
<dbReference type="GO" id="GO:0006813">
    <property type="term" value="P:potassium ion transport"/>
    <property type="evidence" value="ECO:0007669"/>
    <property type="project" value="InterPro"/>
</dbReference>
<dbReference type="FunFam" id="3.30.70.1450:FF:000003">
    <property type="entry name" value="Putative transport protein YbjL"/>
    <property type="match status" value="1"/>
</dbReference>
<dbReference type="Gene3D" id="3.30.70.1450">
    <property type="entry name" value="Regulator of K+ conductance, C-terminal domain"/>
    <property type="match status" value="1"/>
</dbReference>
<dbReference type="HAMAP" id="MF_01015">
    <property type="entry name" value="YbjL"/>
    <property type="match status" value="1"/>
</dbReference>
<dbReference type="InterPro" id="IPR050144">
    <property type="entry name" value="AAE_transporter"/>
</dbReference>
<dbReference type="InterPro" id="IPR006037">
    <property type="entry name" value="RCK_C"/>
</dbReference>
<dbReference type="InterPro" id="IPR036721">
    <property type="entry name" value="RCK_C_sf"/>
</dbReference>
<dbReference type="InterPro" id="IPR023017">
    <property type="entry name" value="Transp_YbjL_put"/>
</dbReference>
<dbReference type="InterPro" id="IPR006512">
    <property type="entry name" value="YidE_YbjL"/>
</dbReference>
<dbReference type="NCBIfam" id="NF003440">
    <property type="entry name" value="PRK04972.1"/>
    <property type="match status" value="1"/>
</dbReference>
<dbReference type="NCBIfam" id="TIGR01625">
    <property type="entry name" value="YidE_YbjL_dupl"/>
    <property type="match status" value="2"/>
</dbReference>
<dbReference type="PANTHER" id="PTHR30445">
    <property type="entry name" value="K(+)_H(+) ANTIPORTER SUBUNIT KHTT"/>
    <property type="match status" value="1"/>
</dbReference>
<dbReference type="PANTHER" id="PTHR30445:SF10">
    <property type="entry name" value="TRANSPORT PROTEIN YBJL-RELATED"/>
    <property type="match status" value="1"/>
</dbReference>
<dbReference type="Pfam" id="PF06826">
    <property type="entry name" value="Asp-Al_Ex"/>
    <property type="match status" value="2"/>
</dbReference>
<dbReference type="Pfam" id="PF02080">
    <property type="entry name" value="TrkA_C"/>
    <property type="match status" value="2"/>
</dbReference>
<dbReference type="SUPFAM" id="SSF116726">
    <property type="entry name" value="TrkA C-terminal domain-like"/>
    <property type="match status" value="2"/>
</dbReference>
<dbReference type="PROSITE" id="PS51202">
    <property type="entry name" value="RCK_C"/>
    <property type="match status" value="2"/>
</dbReference>
<keyword id="KW-1003">Cell membrane</keyword>
<keyword id="KW-0472">Membrane</keyword>
<keyword id="KW-0677">Repeat</keyword>
<keyword id="KW-0812">Transmembrane</keyword>
<keyword id="KW-1133">Transmembrane helix</keyword>
<keyword id="KW-0813">Transport</keyword>
<protein>
    <recommendedName>
        <fullName evidence="1">Putative transport protein YbjL</fullName>
    </recommendedName>
</protein>
<accession>B5QXX4</accession>
<name>YBJL_SALEP</name>
<organism>
    <name type="scientific">Salmonella enteritidis PT4 (strain P125109)</name>
    <dbReference type="NCBI Taxonomy" id="550537"/>
    <lineage>
        <taxon>Bacteria</taxon>
        <taxon>Pseudomonadati</taxon>
        <taxon>Pseudomonadota</taxon>
        <taxon>Gammaproteobacteria</taxon>
        <taxon>Enterobacterales</taxon>
        <taxon>Enterobacteriaceae</taxon>
        <taxon>Salmonella</taxon>
    </lineage>
</organism>
<feature type="chain" id="PRO_1000135191" description="Putative transport protein YbjL">
    <location>
        <begin position="1"/>
        <end position="561"/>
    </location>
</feature>
<feature type="transmembrane region" description="Helical" evidence="1">
    <location>
        <begin position="8"/>
        <end position="28"/>
    </location>
</feature>
<feature type="transmembrane region" description="Helical" evidence="1">
    <location>
        <begin position="32"/>
        <end position="52"/>
    </location>
</feature>
<feature type="transmembrane region" description="Helical" evidence="1">
    <location>
        <begin position="66"/>
        <end position="86"/>
    </location>
</feature>
<feature type="transmembrane region" description="Helical" evidence="1">
    <location>
        <begin position="94"/>
        <end position="114"/>
    </location>
</feature>
<feature type="transmembrane region" description="Helical" evidence="1">
    <location>
        <begin position="158"/>
        <end position="178"/>
    </location>
</feature>
<feature type="transmembrane region" description="Helical" evidence="1">
    <location>
        <begin position="383"/>
        <end position="403"/>
    </location>
</feature>
<feature type="transmembrane region" description="Helical" evidence="1">
    <location>
        <begin position="406"/>
        <end position="426"/>
    </location>
</feature>
<feature type="transmembrane region" description="Helical" evidence="1">
    <location>
        <begin position="447"/>
        <end position="467"/>
    </location>
</feature>
<feature type="transmembrane region" description="Helical" evidence="1">
    <location>
        <begin position="475"/>
        <end position="495"/>
    </location>
</feature>
<feature type="transmembrane region" description="Helical" evidence="1">
    <location>
        <begin position="540"/>
        <end position="560"/>
    </location>
</feature>
<feature type="domain" description="RCK C-terminal 1" evidence="1">
    <location>
        <begin position="200"/>
        <end position="288"/>
    </location>
</feature>
<feature type="domain" description="RCK C-terminal 2" evidence="1">
    <location>
        <begin position="292"/>
        <end position="373"/>
    </location>
</feature>
<evidence type="ECO:0000255" key="1">
    <source>
        <dbReference type="HAMAP-Rule" id="MF_01015"/>
    </source>
</evidence>
<comment type="subcellular location">
    <subcellularLocation>
        <location evidence="1">Cell membrane</location>
        <topology evidence="1">Multi-pass membrane protein</topology>
    </subcellularLocation>
</comment>
<comment type="similarity">
    <text evidence="1">Belongs to the AAE transporter (TC 2.A.81) family. YbjL subfamily.</text>
</comment>